<evidence type="ECO:0000255" key="1">
    <source>
        <dbReference type="HAMAP-Rule" id="MF_00392"/>
    </source>
</evidence>
<evidence type="ECO:0000305" key="2"/>
<name>LPXB_COXBN</name>
<organism>
    <name type="scientific">Coxiella burnetii (strain Dugway 5J108-111)</name>
    <dbReference type="NCBI Taxonomy" id="434922"/>
    <lineage>
        <taxon>Bacteria</taxon>
        <taxon>Pseudomonadati</taxon>
        <taxon>Pseudomonadota</taxon>
        <taxon>Gammaproteobacteria</taxon>
        <taxon>Legionellales</taxon>
        <taxon>Coxiellaceae</taxon>
        <taxon>Coxiella</taxon>
    </lineage>
</organism>
<keyword id="KW-0328">Glycosyltransferase</keyword>
<keyword id="KW-0441">Lipid A biosynthesis</keyword>
<keyword id="KW-0444">Lipid biosynthesis</keyword>
<keyword id="KW-0443">Lipid metabolism</keyword>
<keyword id="KW-0808">Transferase</keyword>
<accession>A9KC41</accession>
<protein>
    <recommendedName>
        <fullName evidence="1">Lipid-A-disaccharide synthase</fullName>
        <ecNumber evidence="1">2.4.1.182</ecNumber>
    </recommendedName>
</protein>
<comment type="function">
    <text evidence="1">Condensation of UDP-2,3-diacylglucosamine and 2,3-diacylglucosamine-1-phosphate to form lipid A disaccharide, a precursor of lipid A, a phosphorylated glycolipid that anchors the lipopolysaccharide to the outer membrane of the cell.</text>
</comment>
<comment type="catalytic activity">
    <reaction evidence="1">
        <text>a lipid X + a UDP-2-N,3-O-bis[(3R)-3-hydroxyacyl]-alpha-D-glucosamine = a lipid A disaccharide + UDP + H(+)</text>
        <dbReference type="Rhea" id="RHEA:67828"/>
        <dbReference type="ChEBI" id="CHEBI:15378"/>
        <dbReference type="ChEBI" id="CHEBI:58223"/>
        <dbReference type="ChEBI" id="CHEBI:137748"/>
        <dbReference type="ChEBI" id="CHEBI:176338"/>
        <dbReference type="ChEBI" id="CHEBI:176343"/>
        <dbReference type="EC" id="2.4.1.182"/>
    </reaction>
</comment>
<comment type="pathway">
    <text evidence="1">Bacterial outer membrane biogenesis; LPS lipid A biosynthesis.</text>
</comment>
<comment type="similarity">
    <text evidence="1">Belongs to the LpxB family.</text>
</comment>
<comment type="sequence caution" evidence="2">
    <conflict type="erroneous initiation">
        <sequence resource="EMBL-CDS" id="ABS78090"/>
    </conflict>
</comment>
<gene>
    <name evidence="1" type="primary">lpxB</name>
    <name type="ordered locus">CBUD_0632</name>
</gene>
<dbReference type="EC" id="2.4.1.182" evidence="1"/>
<dbReference type="EMBL" id="CP000733">
    <property type="protein sequence ID" value="ABS78090.2"/>
    <property type="status" value="ALT_INIT"/>
    <property type="molecule type" value="Genomic_DNA"/>
</dbReference>
<dbReference type="RefSeq" id="WP_043880846.1">
    <property type="nucleotide sequence ID" value="NC_009727.1"/>
</dbReference>
<dbReference type="SMR" id="A9KC41"/>
<dbReference type="CAZy" id="GT19">
    <property type="family name" value="Glycosyltransferase Family 19"/>
</dbReference>
<dbReference type="KEGG" id="cbd:CBUD_0632"/>
<dbReference type="HOGENOM" id="CLU_036577_3_1_6"/>
<dbReference type="UniPathway" id="UPA00973"/>
<dbReference type="Proteomes" id="UP000008555">
    <property type="component" value="Chromosome"/>
</dbReference>
<dbReference type="GO" id="GO:0016020">
    <property type="term" value="C:membrane"/>
    <property type="evidence" value="ECO:0007669"/>
    <property type="project" value="GOC"/>
</dbReference>
<dbReference type="GO" id="GO:0008915">
    <property type="term" value="F:lipid-A-disaccharide synthase activity"/>
    <property type="evidence" value="ECO:0007669"/>
    <property type="project" value="UniProtKB-UniRule"/>
</dbReference>
<dbReference type="GO" id="GO:0005543">
    <property type="term" value="F:phospholipid binding"/>
    <property type="evidence" value="ECO:0007669"/>
    <property type="project" value="TreeGrafter"/>
</dbReference>
<dbReference type="GO" id="GO:0009245">
    <property type="term" value="P:lipid A biosynthetic process"/>
    <property type="evidence" value="ECO:0007669"/>
    <property type="project" value="UniProtKB-UniRule"/>
</dbReference>
<dbReference type="HAMAP" id="MF_00392">
    <property type="entry name" value="LpxB"/>
    <property type="match status" value="1"/>
</dbReference>
<dbReference type="InterPro" id="IPR003835">
    <property type="entry name" value="Glyco_trans_19"/>
</dbReference>
<dbReference type="NCBIfam" id="TIGR00215">
    <property type="entry name" value="lpxB"/>
    <property type="match status" value="1"/>
</dbReference>
<dbReference type="PANTHER" id="PTHR30372">
    <property type="entry name" value="LIPID-A-DISACCHARIDE SYNTHASE"/>
    <property type="match status" value="1"/>
</dbReference>
<dbReference type="PANTHER" id="PTHR30372:SF4">
    <property type="entry name" value="LIPID-A-DISACCHARIDE SYNTHASE, MITOCHONDRIAL-RELATED"/>
    <property type="match status" value="1"/>
</dbReference>
<dbReference type="Pfam" id="PF02684">
    <property type="entry name" value="LpxB"/>
    <property type="match status" value="1"/>
</dbReference>
<dbReference type="SUPFAM" id="SSF53756">
    <property type="entry name" value="UDP-Glycosyltransferase/glycogen phosphorylase"/>
    <property type="match status" value="1"/>
</dbReference>
<reference key="1">
    <citation type="journal article" date="2009" name="Infect. Immun.">
        <title>Comparative genomics reveal extensive transposon-mediated genomic plasticity and diversity among potential effector proteins within the genus Coxiella.</title>
        <authorList>
            <person name="Beare P.A."/>
            <person name="Unsworth N."/>
            <person name="Andoh M."/>
            <person name="Voth D.E."/>
            <person name="Omsland A."/>
            <person name="Gilk S.D."/>
            <person name="Williams K.P."/>
            <person name="Sobral B.W."/>
            <person name="Kupko J.J. III"/>
            <person name="Porcella S.F."/>
            <person name="Samuel J.E."/>
            <person name="Heinzen R.A."/>
        </authorList>
    </citation>
    <scope>NUCLEOTIDE SEQUENCE [LARGE SCALE GENOMIC DNA]</scope>
    <source>
        <strain>Dugway 5J108-111</strain>
    </source>
</reference>
<feature type="chain" id="PRO_1000080276" description="Lipid-A-disaccharide synthase">
    <location>
        <begin position="1"/>
        <end position="376"/>
    </location>
</feature>
<proteinExistence type="inferred from homology"/>
<sequence length="376" mass="41928">MSNKSVLLIAGEPSGDLLGAHLAQSLKSLEPNLKLAGMGGKRMREAGVEVFINADKLAVVGLLEILRQFRDIRHAMQTLKRYFKKTPPDLVVFIDYPGFNLHMAKQAKKAGIKVLYYVSPQIWAWRYGRIKKIKKYVDHMAVLFDFEEKLYQKENVPVSFVGHPLANAPTPSLSRNEICKQFNLDPDKPIVALFPGSREQEINKLLPMMVQAGKLIQTQIPTVQFILPLALNLALDKIRPFLSPEIKVIQNDISHVLAIAHAAVAASGTVTLEIALQQVPLVIIYKVAPLTFWLGKKLIRLSFIGLCNLVSPEPVAVELLQQDATPQAIADEVFQLLNNHNYRQSIIGKLGHLRPQLDRGNAAQNVAKVVHNLIFS</sequence>